<dbReference type="EMBL" id="AC002534">
    <property type="protein sequence ID" value="AAB70030.1"/>
    <property type="status" value="ALT_SEQ"/>
    <property type="molecule type" value="Genomic_DNA"/>
</dbReference>
<dbReference type="EMBL" id="CP002686">
    <property type="protein sequence ID" value="AEE77949.1"/>
    <property type="molecule type" value="Genomic_DNA"/>
</dbReference>
<dbReference type="EMBL" id="DQ132692">
    <property type="protein sequence ID" value="AAZ52722.1"/>
    <property type="molecule type" value="mRNA"/>
</dbReference>
<dbReference type="EMBL" id="AY924784">
    <property type="protein sequence ID" value="AAX23859.1"/>
    <property type="molecule type" value="mRNA"/>
</dbReference>
<dbReference type="RefSeq" id="NP_001154664.1">
    <molecule id="Q5BPP4-1"/>
    <property type="nucleotide sequence ID" value="NM_001161192.2"/>
</dbReference>
<dbReference type="RefSeq" id="NP_190063.1">
    <property type="nucleotide sequence ID" value="NM_114346.2"/>
</dbReference>
<dbReference type="SMR" id="Q5BPP4"/>
<dbReference type="PaxDb" id="3702-AT3G44770.1"/>
<dbReference type="ProteomicsDB" id="234634">
    <molecule id="Q5BPP4-1"/>
</dbReference>
<dbReference type="EnsemblPlants" id="AT3G44770.2">
    <molecule id="Q5BPP4-1"/>
    <property type="protein sequence ID" value="AT3G44770.2"/>
    <property type="gene ID" value="AT3G44770"/>
</dbReference>
<dbReference type="GeneID" id="823608"/>
<dbReference type="Gramene" id="AT3G44770.2">
    <molecule id="Q5BPP4-1"/>
    <property type="protein sequence ID" value="AT3G44770.2"/>
    <property type="gene ID" value="AT3G44770"/>
</dbReference>
<dbReference type="KEGG" id="ath:AT3G44770"/>
<dbReference type="Araport" id="AT3G44770"/>
<dbReference type="TAIR" id="AT3G44770"/>
<dbReference type="HOGENOM" id="CLU_053767_2_1_1"/>
<dbReference type="InParanoid" id="Q5BPP4"/>
<dbReference type="OMA" id="ILQISTW"/>
<dbReference type="OrthoDB" id="1096941at2759"/>
<dbReference type="PhylomeDB" id="Q5BPP4"/>
<dbReference type="PRO" id="PR:Q5BPP4"/>
<dbReference type="Proteomes" id="UP000006548">
    <property type="component" value="Chromosome 3"/>
</dbReference>
<dbReference type="ExpressionAtlas" id="Q5BPP4">
    <property type="expression patterns" value="baseline and differential"/>
</dbReference>
<dbReference type="InterPro" id="IPR006462">
    <property type="entry name" value="MS5"/>
</dbReference>
<dbReference type="NCBIfam" id="TIGR01572">
    <property type="entry name" value="A_thl_para_3677"/>
    <property type="match status" value="1"/>
</dbReference>
<dbReference type="PANTHER" id="PTHR31260:SF32">
    <property type="match status" value="1"/>
</dbReference>
<dbReference type="PANTHER" id="PTHR31260">
    <property type="entry name" value="CYSTATIN/MONELLIN SUPERFAMILY PROTEIN"/>
    <property type="match status" value="1"/>
</dbReference>
<dbReference type="Pfam" id="PF04776">
    <property type="entry name" value="protein_MS5"/>
    <property type="match status" value="1"/>
</dbReference>
<keyword id="KW-0025">Alternative splicing</keyword>
<keyword id="KW-1185">Reference proteome</keyword>
<feature type="chain" id="PRO_0000363125" description="UPF0725 protein At3g44770">
    <location>
        <begin position="1"/>
        <end position="318"/>
    </location>
</feature>
<accession>Q5BPP4</accession>
<accession>O22236</accession>
<sequence>MADILRQLLDCGKLSDETCHSILCGLGQHVDALHLSKTEEEVDGWTSEEDEELDQEYCRQVTESLGFDIDGKVCIPACGISPVFLGANKNPRSEVALYGRLGVHCFNIDKERKFQYMRIPKYNVQYPEAMSFHITVEVNDLADNSAHTLQNLVTRSFSRNGEDLRVSTGICRIKPKTPEREICLVDEEAIDKFYRGVMPNFVSKLGADDDKLRFYEVQEQDVCANDWLRLYTEFALFSYWRYNEDGFESCLPVEIKKIIVETCDTHREPRMKLKSSNAIFHINFNAKSCDYKSVSRRTTDGKPGHIVLEINTWKLSST</sequence>
<comment type="alternative products">
    <event type="alternative splicing"/>
    <isoform>
        <id>Q5BPP4-1</id>
        <name>1</name>
        <sequence type="displayed"/>
    </isoform>
    <text>A number of isoforms are produced. According to EST sequences.</text>
</comment>
<comment type="similarity">
    <text evidence="1">Belongs to the UPF0725 (EMB2204) family.</text>
</comment>
<comment type="sequence caution" evidence="1">
    <conflict type="erroneous gene model prediction">
        <sequence resource="EMBL-CDS" id="AAB70030"/>
    </conflict>
</comment>
<evidence type="ECO:0000305" key="1"/>
<protein>
    <recommendedName>
        <fullName>UPF0725 protein At3g44770</fullName>
    </recommendedName>
</protein>
<name>Y3477_ARATH</name>
<gene>
    <name type="ordered locus">At3g44770</name>
    <name type="ORF">T32N15.6</name>
</gene>
<reference key="1">
    <citation type="journal article" date="2000" name="Nature">
        <title>Sequence and analysis of chromosome 3 of the plant Arabidopsis thaliana.</title>
        <authorList>
            <person name="Salanoubat M."/>
            <person name="Lemcke K."/>
            <person name="Rieger M."/>
            <person name="Ansorge W."/>
            <person name="Unseld M."/>
            <person name="Fartmann B."/>
            <person name="Valle G."/>
            <person name="Bloecker H."/>
            <person name="Perez-Alonso M."/>
            <person name="Obermaier B."/>
            <person name="Delseny M."/>
            <person name="Boutry M."/>
            <person name="Grivell L.A."/>
            <person name="Mache R."/>
            <person name="Puigdomenech P."/>
            <person name="De Simone V."/>
            <person name="Choisne N."/>
            <person name="Artiguenave F."/>
            <person name="Robert C."/>
            <person name="Brottier P."/>
            <person name="Wincker P."/>
            <person name="Cattolico L."/>
            <person name="Weissenbach J."/>
            <person name="Saurin W."/>
            <person name="Quetier F."/>
            <person name="Schaefer M."/>
            <person name="Mueller-Auer S."/>
            <person name="Gabel C."/>
            <person name="Fuchs M."/>
            <person name="Benes V."/>
            <person name="Wurmbach E."/>
            <person name="Drzonek H."/>
            <person name="Erfle H."/>
            <person name="Jordan N."/>
            <person name="Bangert S."/>
            <person name="Wiedelmann R."/>
            <person name="Kranz H."/>
            <person name="Voss H."/>
            <person name="Holland R."/>
            <person name="Brandt P."/>
            <person name="Nyakatura G."/>
            <person name="Vezzi A."/>
            <person name="D'Angelo M."/>
            <person name="Pallavicini A."/>
            <person name="Toppo S."/>
            <person name="Simionati B."/>
            <person name="Conrad A."/>
            <person name="Hornischer K."/>
            <person name="Kauer G."/>
            <person name="Loehnert T.-H."/>
            <person name="Nordsiek G."/>
            <person name="Reichelt J."/>
            <person name="Scharfe M."/>
            <person name="Schoen O."/>
            <person name="Bargues M."/>
            <person name="Terol J."/>
            <person name="Climent J."/>
            <person name="Navarro P."/>
            <person name="Collado C."/>
            <person name="Perez-Perez A."/>
            <person name="Ottenwaelder B."/>
            <person name="Duchemin D."/>
            <person name="Cooke R."/>
            <person name="Laudie M."/>
            <person name="Berger-Llauro C."/>
            <person name="Purnelle B."/>
            <person name="Masuy D."/>
            <person name="de Haan M."/>
            <person name="Maarse A.C."/>
            <person name="Alcaraz J.-P."/>
            <person name="Cottet A."/>
            <person name="Casacuberta E."/>
            <person name="Monfort A."/>
            <person name="Argiriou A."/>
            <person name="Flores M."/>
            <person name="Liguori R."/>
            <person name="Vitale D."/>
            <person name="Mannhaupt G."/>
            <person name="Haase D."/>
            <person name="Schoof H."/>
            <person name="Rudd S."/>
            <person name="Zaccaria P."/>
            <person name="Mewes H.-W."/>
            <person name="Mayer K.F.X."/>
            <person name="Kaul S."/>
            <person name="Town C.D."/>
            <person name="Koo H.L."/>
            <person name="Tallon L.J."/>
            <person name="Jenkins J."/>
            <person name="Rooney T."/>
            <person name="Rizzo M."/>
            <person name="Walts A."/>
            <person name="Utterback T."/>
            <person name="Fujii C.Y."/>
            <person name="Shea T.P."/>
            <person name="Creasy T.H."/>
            <person name="Haas B."/>
            <person name="Maiti R."/>
            <person name="Wu D."/>
            <person name="Peterson J."/>
            <person name="Van Aken S."/>
            <person name="Pai G."/>
            <person name="Militscher J."/>
            <person name="Sellers P."/>
            <person name="Gill J.E."/>
            <person name="Feldblyum T.V."/>
            <person name="Preuss D."/>
            <person name="Lin X."/>
            <person name="Nierman W.C."/>
            <person name="Salzberg S.L."/>
            <person name="White O."/>
            <person name="Venter J.C."/>
            <person name="Fraser C.M."/>
            <person name="Kaneko T."/>
            <person name="Nakamura Y."/>
            <person name="Sato S."/>
            <person name="Kato T."/>
            <person name="Asamizu E."/>
            <person name="Sasamoto S."/>
            <person name="Kimura T."/>
            <person name="Idesawa K."/>
            <person name="Kawashima K."/>
            <person name="Kishida Y."/>
            <person name="Kiyokawa C."/>
            <person name="Kohara M."/>
            <person name="Matsumoto M."/>
            <person name="Matsuno A."/>
            <person name="Muraki A."/>
            <person name="Nakayama S."/>
            <person name="Nakazaki N."/>
            <person name="Shinpo S."/>
            <person name="Takeuchi C."/>
            <person name="Wada T."/>
            <person name="Watanabe A."/>
            <person name="Yamada M."/>
            <person name="Yasuda M."/>
            <person name="Tabata S."/>
        </authorList>
    </citation>
    <scope>NUCLEOTIDE SEQUENCE [LARGE SCALE GENOMIC DNA]</scope>
    <source>
        <strain>cv. Columbia</strain>
    </source>
</reference>
<reference key="2">
    <citation type="journal article" date="2017" name="Plant J.">
        <title>Araport11: a complete reannotation of the Arabidopsis thaliana reference genome.</title>
        <authorList>
            <person name="Cheng C.Y."/>
            <person name="Krishnakumar V."/>
            <person name="Chan A.P."/>
            <person name="Thibaud-Nissen F."/>
            <person name="Schobel S."/>
            <person name="Town C.D."/>
        </authorList>
    </citation>
    <scope>GENOME REANNOTATION</scope>
    <source>
        <strain>cv. Columbia</strain>
    </source>
</reference>
<reference key="3">
    <citation type="journal article" date="2005" name="Plant Physiol.">
        <title>Analysis of the cDNAs of hypothetical genes on Arabidopsis chromosome 2 reveals numerous transcript variants.</title>
        <authorList>
            <person name="Xiao Y.-L."/>
            <person name="Smith S.R."/>
            <person name="Ishmael N."/>
            <person name="Redman J.C."/>
            <person name="Kumar N."/>
            <person name="Monaghan E.L."/>
            <person name="Ayele M."/>
            <person name="Haas B.J."/>
            <person name="Wu H.C."/>
            <person name="Town C.D."/>
        </authorList>
    </citation>
    <scope>NUCLEOTIDE SEQUENCE [LARGE SCALE MRNA]</scope>
    <source>
        <strain>cv. Columbia</strain>
    </source>
</reference>
<reference key="4">
    <citation type="submission" date="2005-02" db="EMBL/GenBank/DDBJ databases">
        <authorList>
            <person name="Underwood B.A."/>
            <person name="Xiao Y.-L."/>
            <person name="Moskal W.A. Jr."/>
            <person name="Monaghan E.L."/>
            <person name="Wang W."/>
            <person name="Redman J.C."/>
            <person name="Wu H.C."/>
            <person name="Utterback T."/>
            <person name="Town C.D."/>
        </authorList>
    </citation>
    <scope>NUCLEOTIDE SEQUENCE [LARGE SCALE MRNA]</scope>
    <source>
        <strain>cv. Columbia</strain>
    </source>
</reference>
<proteinExistence type="evidence at transcript level"/>
<organism>
    <name type="scientific">Arabidopsis thaliana</name>
    <name type="common">Mouse-ear cress</name>
    <dbReference type="NCBI Taxonomy" id="3702"/>
    <lineage>
        <taxon>Eukaryota</taxon>
        <taxon>Viridiplantae</taxon>
        <taxon>Streptophyta</taxon>
        <taxon>Embryophyta</taxon>
        <taxon>Tracheophyta</taxon>
        <taxon>Spermatophyta</taxon>
        <taxon>Magnoliopsida</taxon>
        <taxon>eudicotyledons</taxon>
        <taxon>Gunneridae</taxon>
        <taxon>Pentapetalae</taxon>
        <taxon>rosids</taxon>
        <taxon>malvids</taxon>
        <taxon>Brassicales</taxon>
        <taxon>Brassicaceae</taxon>
        <taxon>Camelineae</taxon>
        <taxon>Arabidopsis</taxon>
    </lineage>
</organism>